<proteinExistence type="inferred from homology"/>
<reference key="1">
    <citation type="journal article" date="2003" name="Nat. Genet.">
        <title>Comparative analysis of the genome sequences of Bordetella pertussis, Bordetella parapertussis and Bordetella bronchiseptica.</title>
        <authorList>
            <person name="Parkhill J."/>
            <person name="Sebaihia M."/>
            <person name="Preston A."/>
            <person name="Murphy L.D."/>
            <person name="Thomson N.R."/>
            <person name="Harris D.E."/>
            <person name="Holden M.T.G."/>
            <person name="Churcher C.M."/>
            <person name="Bentley S.D."/>
            <person name="Mungall K.L."/>
            <person name="Cerdeno-Tarraga A.-M."/>
            <person name="Temple L."/>
            <person name="James K.D."/>
            <person name="Harris B."/>
            <person name="Quail M.A."/>
            <person name="Achtman M."/>
            <person name="Atkin R."/>
            <person name="Baker S."/>
            <person name="Basham D."/>
            <person name="Bason N."/>
            <person name="Cherevach I."/>
            <person name="Chillingworth T."/>
            <person name="Collins M."/>
            <person name="Cronin A."/>
            <person name="Davis P."/>
            <person name="Doggett J."/>
            <person name="Feltwell T."/>
            <person name="Goble A."/>
            <person name="Hamlin N."/>
            <person name="Hauser H."/>
            <person name="Holroyd S."/>
            <person name="Jagels K."/>
            <person name="Leather S."/>
            <person name="Moule S."/>
            <person name="Norberczak H."/>
            <person name="O'Neil S."/>
            <person name="Ormond D."/>
            <person name="Price C."/>
            <person name="Rabbinowitsch E."/>
            <person name="Rutter S."/>
            <person name="Sanders M."/>
            <person name="Saunders D."/>
            <person name="Seeger K."/>
            <person name="Sharp S."/>
            <person name="Simmonds M."/>
            <person name="Skelton J."/>
            <person name="Squares R."/>
            <person name="Squares S."/>
            <person name="Stevens K."/>
            <person name="Unwin L."/>
            <person name="Whitehead S."/>
            <person name="Barrell B.G."/>
            <person name="Maskell D.J."/>
        </authorList>
    </citation>
    <scope>NUCLEOTIDE SEQUENCE [LARGE SCALE GENOMIC DNA]</scope>
    <source>
        <strain>Tohama I / ATCC BAA-589 / NCTC 13251</strain>
    </source>
</reference>
<protein>
    <recommendedName>
        <fullName evidence="1">Chromosomal replication initiator protein DnaA</fullName>
    </recommendedName>
</protein>
<keyword id="KW-0067">ATP-binding</keyword>
<keyword id="KW-0963">Cytoplasm</keyword>
<keyword id="KW-0235">DNA replication</keyword>
<keyword id="KW-0238">DNA-binding</keyword>
<keyword id="KW-0446">Lipid-binding</keyword>
<keyword id="KW-0547">Nucleotide-binding</keyword>
<keyword id="KW-1185">Reference proteome</keyword>
<sequence length="469" mass="52395">MKEFWQTCVSRLEQELPPQQISAWIRPLVPLAYDEAQAVLRVAAPNRFKLDWVRKNFSHQIEALAAEWYQRPVQVTFELPGTSSAPRIPMAVPRPVAVSVPAVVAAVQQASEPAPPAPASADAANIVYERSRLNTDLTFENFVTGKANQLARAAALQVAENPGTSYNPLFLYGGVGLGKTHLIHAIGNAMVAAGTGVRVRYVHADQYVSDVVKAYQRKAFDDFKRYYHSLDLLLIDDIQFFSGKNRTQEEFFYAFEAMVAQRKQIIITSDTYPKELSGIDSRLISRFDSGLTVAIEPPELEMRVAILLRKAESEGVPMPEEVAFFIAKHLRSNVRELEGALRKVLAYARFHGRDVLTVDVCKEALKDLLSVSNGQITVENIQKTVADFYKIKVADMYSKRRPANIALPRQVAMYLAKELTQKSLPEIGDLFGGRDHTTVLHAVRKISDARAKQAELNHTLHVLEQTLKG</sequence>
<name>DNAA_BORPE</name>
<feature type="chain" id="PRO_0000114143" description="Chromosomal replication initiator protein DnaA">
    <location>
        <begin position="1"/>
        <end position="469"/>
    </location>
</feature>
<feature type="region of interest" description="Domain I, interacts with DnaA modulators" evidence="1">
    <location>
        <begin position="1"/>
        <end position="71"/>
    </location>
</feature>
<feature type="region of interest" description="Domain II" evidence="1">
    <location>
        <begin position="71"/>
        <end position="131"/>
    </location>
</feature>
<feature type="region of interest" description="Domain III, AAA+ region" evidence="1">
    <location>
        <begin position="132"/>
        <end position="348"/>
    </location>
</feature>
<feature type="region of interest" description="Domain IV, binds dsDNA" evidence="1">
    <location>
        <begin position="349"/>
        <end position="469"/>
    </location>
</feature>
<feature type="binding site" evidence="1">
    <location>
        <position position="176"/>
    </location>
    <ligand>
        <name>ATP</name>
        <dbReference type="ChEBI" id="CHEBI:30616"/>
    </ligand>
</feature>
<feature type="binding site" evidence="1">
    <location>
        <position position="178"/>
    </location>
    <ligand>
        <name>ATP</name>
        <dbReference type="ChEBI" id="CHEBI:30616"/>
    </ligand>
</feature>
<feature type="binding site" evidence="1">
    <location>
        <position position="179"/>
    </location>
    <ligand>
        <name>ATP</name>
        <dbReference type="ChEBI" id="CHEBI:30616"/>
    </ligand>
</feature>
<feature type="binding site" evidence="1">
    <location>
        <position position="180"/>
    </location>
    <ligand>
        <name>ATP</name>
        <dbReference type="ChEBI" id="CHEBI:30616"/>
    </ligand>
</feature>
<organism>
    <name type="scientific">Bordetella pertussis (strain Tohama I / ATCC BAA-589 / NCTC 13251)</name>
    <dbReference type="NCBI Taxonomy" id="257313"/>
    <lineage>
        <taxon>Bacteria</taxon>
        <taxon>Pseudomonadati</taxon>
        <taxon>Pseudomonadota</taxon>
        <taxon>Betaproteobacteria</taxon>
        <taxon>Burkholderiales</taxon>
        <taxon>Alcaligenaceae</taxon>
        <taxon>Bordetella</taxon>
    </lineage>
</organism>
<evidence type="ECO:0000255" key="1">
    <source>
        <dbReference type="HAMAP-Rule" id="MF_00377"/>
    </source>
</evidence>
<dbReference type="EMBL" id="BX640412">
    <property type="protein sequence ID" value="CAE44820.1"/>
    <property type="molecule type" value="Genomic_DNA"/>
</dbReference>
<dbReference type="RefSeq" id="NP_879344.1">
    <property type="nucleotide sequence ID" value="NC_002929.2"/>
</dbReference>
<dbReference type="RefSeq" id="WP_010929554.1">
    <property type="nucleotide sequence ID" value="NZ_CP039022.1"/>
</dbReference>
<dbReference type="SMR" id="Q7VSE0"/>
<dbReference type="STRING" id="257313.BP0491"/>
<dbReference type="PaxDb" id="257313-BP0491"/>
<dbReference type="GeneID" id="93206201"/>
<dbReference type="KEGG" id="bpe:BP0491"/>
<dbReference type="PATRIC" id="fig|257313.5.peg.528"/>
<dbReference type="eggNOG" id="COG0593">
    <property type="taxonomic scope" value="Bacteria"/>
</dbReference>
<dbReference type="HOGENOM" id="CLU_026910_0_1_4"/>
<dbReference type="Proteomes" id="UP000002676">
    <property type="component" value="Chromosome"/>
</dbReference>
<dbReference type="GO" id="GO:0005737">
    <property type="term" value="C:cytoplasm"/>
    <property type="evidence" value="ECO:0007669"/>
    <property type="project" value="UniProtKB-SubCell"/>
</dbReference>
<dbReference type="GO" id="GO:0005886">
    <property type="term" value="C:plasma membrane"/>
    <property type="evidence" value="ECO:0007669"/>
    <property type="project" value="TreeGrafter"/>
</dbReference>
<dbReference type="GO" id="GO:0005524">
    <property type="term" value="F:ATP binding"/>
    <property type="evidence" value="ECO:0007669"/>
    <property type="project" value="UniProtKB-UniRule"/>
</dbReference>
<dbReference type="GO" id="GO:0016887">
    <property type="term" value="F:ATP hydrolysis activity"/>
    <property type="evidence" value="ECO:0007669"/>
    <property type="project" value="InterPro"/>
</dbReference>
<dbReference type="GO" id="GO:0003688">
    <property type="term" value="F:DNA replication origin binding"/>
    <property type="evidence" value="ECO:0007669"/>
    <property type="project" value="UniProtKB-UniRule"/>
</dbReference>
<dbReference type="GO" id="GO:0008289">
    <property type="term" value="F:lipid binding"/>
    <property type="evidence" value="ECO:0007669"/>
    <property type="project" value="UniProtKB-KW"/>
</dbReference>
<dbReference type="GO" id="GO:0006270">
    <property type="term" value="P:DNA replication initiation"/>
    <property type="evidence" value="ECO:0007669"/>
    <property type="project" value="UniProtKB-UniRule"/>
</dbReference>
<dbReference type="GO" id="GO:0006275">
    <property type="term" value="P:regulation of DNA replication"/>
    <property type="evidence" value="ECO:0007669"/>
    <property type="project" value="UniProtKB-UniRule"/>
</dbReference>
<dbReference type="CDD" id="cd00009">
    <property type="entry name" value="AAA"/>
    <property type="match status" value="1"/>
</dbReference>
<dbReference type="CDD" id="cd06571">
    <property type="entry name" value="Bac_DnaA_C"/>
    <property type="match status" value="1"/>
</dbReference>
<dbReference type="FunFam" id="1.10.8.60:FF:000003">
    <property type="entry name" value="Chromosomal replication initiator protein DnaA"/>
    <property type="match status" value="1"/>
</dbReference>
<dbReference type="FunFam" id="3.40.50.300:FF:000668">
    <property type="entry name" value="Chromosomal replication initiator protein DnaA"/>
    <property type="match status" value="1"/>
</dbReference>
<dbReference type="Gene3D" id="1.10.1750.10">
    <property type="match status" value="1"/>
</dbReference>
<dbReference type="Gene3D" id="1.10.8.60">
    <property type="match status" value="1"/>
</dbReference>
<dbReference type="Gene3D" id="3.30.300.180">
    <property type="match status" value="1"/>
</dbReference>
<dbReference type="Gene3D" id="3.40.50.300">
    <property type="entry name" value="P-loop containing nucleotide triphosphate hydrolases"/>
    <property type="match status" value="1"/>
</dbReference>
<dbReference type="HAMAP" id="MF_00377">
    <property type="entry name" value="DnaA_bact"/>
    <property type="match status" value="1"/>
</dbReference>
<dbReference type="InterPro" id="IPR003593">
    <property type="entry name" value="AAA+_ATPase"/>
</dbReference>
<dbReference type="InterPro" id="IPR001957">
    <property type="entry name" value="Chromosome_initiator_DnaA"/>
</dbReference>
<dbReference type="InterPro" id="IPR020591">
    <property type="entry name" value="Chromosome_initiator_DnaA-like"/>
</dbReference>
<dbReference type="InterPro" id="IPR018312">
    <property type="entry name" value="Chromosome_initiator_DnaA_CS"/>
</dbReference>
<dbReference type="InterPro" id="IPR013159">
    <property type="entry name" value="DnaA_C"/>
</dbReference>
<dbReference type="InterPro" id="IPR013317">
    <property type="entry name" value="DnaA_dom"/>
</dbReference>
<dbReference type="InterPro" id="IPR024633">
    <property type="entry name" value="DnaA_N_dom"/>
</dbReference>
<dbReference type="InterPro" id="IPR038454">
    <property type="entry name" value="DnaA_N_sf"/>
</dbReference>
<dbReference type="InterPro" id="IPR027417">
    <property type="entry name" value="P-loop_NTPase"/>
</dbReference>
<dbReference type="InterPro" id="IPR010921">
    <property type="entry name" value="Trp_repressor/repl_initiator"/>
</dbReference>
<dbReference type="NCBIfam" id="TIGR00362">
    <property type="entry name" value="DnaA"/>
    <property type="match status" value="1"/>
</dbReference>
<dbReference type="PANTHER" id="PTHR30050">
    <property type="entry name" value="CHROMOSOMAL REPLICATION INITIATOR PROTEIN DNAA"/>
    <property type="match status" value="1"/>
</dbReference>
<dbReference type="PANTHER" id="PTHR30050:SF2">
    <property type="entry name" value="CHROMOSOMAL REPLICATION INITIATOR PROTEIN DNAA"/>
    <property type="match status" value="1"/>
</dbReference>
<dbReference type="Pfam" id="PF00308">
    <property type="entry name" value="Bac_DnaA"/>
    <property type="match status" value="1"/>
</dbReference>
<dbReference type="Pfam" id="PF08299">
    <property type="entry name" value="Bac_DnaA_C"/>
    <property type="match status" value="1"/>
</dbReference>
<dbReference type="Pfam" id="PF11638">
    <property type="entry name" value="DnaA_N"/>
    <property type="match status" value="1"/>
</dbReference>
<dbReference type="PRINTS" id="PR00051">
    <property type="entry name" value="DNAA"/>
</dbReference>
<dbReference type="SMART" id="SM00382">
    <property type="entry name" value="AAA"/>
    <property type="match status" value="1"/>
</dbReference>
<dbReference type="SMART" id="SM00760">
    <property type="entry name" value="Bac_DnaA_C"/>
    <property type="match status" value="1"/>
</dbReference>
<dbReference type="SUPFAM" id="SSF52540">
    <property type="entry name" value="P-loop containing nucleoside triphosphate hydrolases"/>
    <property type="match status" value="1"/>
</dbReference>
<dbReference type="SUPFAM" id="SSF48295">
    <property type="entry name" value="TrpR-like"/>
    <property type="match status" value="1"/>
</dbReference>
<dbReference type="PROSITE" id="PS01008">
    <property type="entry name" value="DNAA"/>
    <property type="match status" value="1"/>
</dbReference>
<comment type="function">
    <text evidence="1">Plays an essential role in the initiation and regulation of chromosomal replication. ATP-DnaA binds to the origin of replication (oriC) to initiate formation of the DNA replication initiation complex once per cell cycle. Binds the DnaA box (a 9 base pair repeat at the origin) and separates the double-stranded (ds)DNA. Forms a right-handed helical filament on oriC DNA; dsDNA binds to the exterior of the filament while single-stranded (ss)DNA is stabiized in the filament's interior. The ATP-DnaA-oriC complex binds and stabilizes one strand of the AT-rich DNA unwinding element (DUE), permitting loading of DNA polymerase. After initiation quickly degrades to an ADP-DnaA complex that is not apt for DNA replication. Binds acidic phospholipids.</text>
</comment>
<comment type="subunit">
    <text evidence="1">Oligomerizes as a right-handed, spiral filament on DNA at oriC.</text>
</comment>
<comment type="subcellular location">
    <subcellularLocation>
        <location evidence="1">Cytoplasm</location>
    </subcellularLocation>
</comment>
<comment type="domain">
    <text evidence="1">Domain I is involved in oligomerization and binding regulators, domain II is flexibile and of varying length in different bacteria, domain III forms the AAA+ region, while domain IV binds dsDNA.</text>
</comment>
<comment type="similarity">
    <text evidence="1">Belongs to the DnaA family.</text>
</comment>
<accession>Q7VSE0</accession>
<gene>
    <name evidence="1" type="primary">dnaA</name>
    <name type="ordered locus">BP0491</name>
</gene>